<proteinExistence type="inferred from homology"/>
<name>GNPI_ANOGA</name>
<reference key="1">
    <citation type="journal article" date="2002" name="Science">
        <title>The genome sequence of the malaria mosquito Anopheles gambiae.</title>
        <authorList>
            <person name="Holt R.A."/>
            <person name="Subramanian G.M."/>
            <person name="Halpern A."/>
            <person name="Sutton G.G."/>
            <person name="Charlab R."/>
            <person name="Nusskern D.R."/>
            <person name="Wincker P."/>
            <person name="Clark A.G."/>
            <person name="Ribeiro J.M.C."/>
            <person name="Wides R."/>
            <person name="Salzberg S.L."/>
            <person name="Loftus B.J."/>
            <person name="Yandell M.D."/>
            <person name="Majoros W.H."/>
            <person name="Rusch D.B."/>
            <person name="Lai Z."/>
            <person name="Kraft C.L."/>
            <person name="Abril J.F."/>
            <person name="Anthouard V."/>
            <person name="Arensburger P."/>
            <person name="Atkinson P.W."/>
            <person name="Baden H."/>
            <person name="de Berardinis V."/>
            <person name="Baldwin D."/>
            <person name="Benes V."/>
            <person name="Biedler J."/>
            <person name="Blass C."/>
            <person name="Bolanos R."/>
            <person name="Boscus D."/>
            <person name="Barnstead M."/>
            <person name="Cai S."/>
            <person name="Center A."/>
            <person name="Chaturverdi K."/>
            <person name="Christophides G.K."/>
            <person name="Chrystal M.A.M."/>
            <person name="Clamp M."/>
            <person name="Cravchik A."/>
            <person name="Curwen V."/>
            <person name="Dana A."/>
            <person name="Delcher A."/>
            <person name="Dew I."/>
            <person name="Evans C.A."/>
            <person name="Flanigan M."/>
            <person name="Grundschober-Freimoser A."/>
            <person name="Friedli L."/>
            <person name="Gu Z."/>
            <person name="Guan P."/>
            <person name="Guigo R."/>
            <person name="Hillenmeyer M.E."/>
            <person name="Hladun S.L."/>
            <person name="Hogan J.R."/>
            <person name="Hong Y.S."/>
            <person name="Hoover J."/>
            <person name="Jaillon O."/>
            <person name="Ke Z."/>
            <person name="Kodira C.D."/>
            <person name="Kokoza E."/>
            <person name="Koutsos A."/>
            <person name="Letunic I."/>
            <person name="Levitsky A.A."/>
            <person name="Liang Y."/>
            <person name="Lin J.-J."/>
            <person name="Lobo N.F."/>
            <person name="Lopez J.R."/>
            <person name="Malek J.A."/>
            <person name="McIntosh T.C."/>
            <person name="Meister S."/>
            <person name="Miller J.R."/>
            <person name="Mobarry C."/>
            <person name="Mongin E."/>
            <person name="Murphy S.D."/>
            <person name="O'Brochta D.A."/>
            <person name="Pfannkoch C."/>
            <person name="Qi R."/>
            <person name="Regier M.A."/>
            <person name="Remington K."/>
            <person name="Shao H."/>
            <person name="Sharakhova M.V."/>
            <person name="Sitter C.D."/>
            <person name="Shetty J."/>
            <person name="Smith T.J."/>
            <person name="Strong R."/>
            <person name="Sun J."/>
            <person name="Thomasova D."/>
            <person name="Ton L.Q."/>
            <person name="Topalis P."/>
            <person name="Tu Z.J."/>
            <person name="Unger M.F."/>
            <person name="Walenz B."/>
            <person name="Wang A.H."/>
            <person name="Wang J."/>
            <person name="Wang M."/>
            <person name="Wang X."/>
            <person name="Woodford K.J."/>
            <person name="Wortman J.R."/>
            <person name="Wu M."/>
            <person name="Yao A."/>
            <person name="Zdobnov E.M."/>
            <person name="Zhang H."/>
            <person name="Zhao Q."/>
            <person name="Zhao S."/>
            <person name="Zhu S.C."/>
            <person name="Zhimulev I."/>
            <person name="Coluzzi M."/>
            <person name="della Torre A."/>
            <person name="Roth C.W."/>
            <person name="Louis C."/>
            <person name="Kalush F."/>
            <person name="Mural R.J."/>
            <person name="Myers E.W."/>
            <person name="Adams M.D."/>
            <person name="Smith H.O."/>
            <person name="Broder S."/>
            <person name="Gardner M.J."/>
            <person name="Fraser C.M."/>
            <person name="Birney E."/>
            <person name="Bork P."/>
            <person name="Brey P.T."/>
            <person name="Venter J.C."/>
            <person name="Weissenbach J."/>
            <person name="Kafatos F.C."/>
            <person name="Collins F.H."/>
            <person name="Hoffman S.L."/>
        </authorList>
    </citation>
    <scope>NUCLEOTIDE SEQUENCE [LARGE SCALE GENOMIC DNA]</scope>
    <source>
        <strain>PEST</strain>
    </source>
</reference>
<organism evidence="5">
    <name type="scientific">Anopheles gambiae</name>
    <name type="common">African malaria mosquito</name>
    <dbReference type="NCBI Taxonomy" id="7165"/>
    <lineage>
        <taxon>Eukaryota</taxon>
        <taxon>Metazoa</taxon>
        <taxon>Ecdysozoa</taxon>
        <taxon>Arthropoda</taxon>
        <taxon>Hexapoda</taxon>
        <taxon>Insecta</taxon>
        <taxon>Pterygota</taxon>
        <taxon>Neoptera</taxon>
        <taxon>Endopterygota</taxon>
        <taxon>Diptera</taxon>
        <taxon>Nematocera</taxon>
        <taxon>Culicoidea</taxon>
        <taxon>Culicidae</taxon>
        <taxon>Anophelinae</taxon>
        <taxon>Anopheles</taxon>
    </lineage>
</organism>
<sequence length="273" mass="31023">MRLIILDTAEYVGEWSAKYVMKRINDFKPGPDRYFTLGLPTGSTPLGMYRHLIKFHQQGRISFKYVKTFNMDEYVDLPRDHPESYHYFMWHNFFKHIDIDPENVHILDGNAPDLVAECDAFEEKIRAAGGIELFIGGIGPDGHIAFNEPGSSLASRTRVKTLAQDTLEANARFFGNDISKVPKQALTVGVATVMDAREVMIMILGSHKAFALYKAIEEGVNHMWTVSAFQQHPHTIMICDEDATLELRVKTVKYFKDCYKLSADGLEQATLRN</sequence>
<evidence type="ECO:0000250" key="1"/>
<evidence type="ECO:0000250" key="2">
    <source>
        <dbReference type="UniProtKB" id="O88958"/>
    </source>
</evidence>
<evidence type="ECO:0000250" key="3">
    <source>
        <dbReference type="UniProtKB" id="P46926"/>
    </source>
</evidence>
<evidence type="ECO:0000305" key="4"/>
<evidence type="ECO:0000312" key="5">
    <source>
        <dbReference type="Proteomes" id="UP000007062"/>
    </source>
</evidence>
<comment type="function">
    <text evidence="3">Catalyzes the reversible conversion of alpha-D-glucosamine 6-phosphate (GlcN-6P) into beta-D-fructose 6-phosphate (Fru-6P) and ammonium ion, a regulatory reaction step in de novo uridine diphosphate-N-acetyl-alpha-D-glucosamine (UDP-GlcNAc) biosynthesis via hexosamine pathway.</text>
</comment>
<comment type="catalytic activity">
    <reaction evidence="3">
        <text>alpha-D-glucosamine 6-phosphate + H2O = beta-D-fructose 6-phosphate + NH4(+)</text>
        <dbReference type="Rhea" id="RHEA:12172"/>
        <dbReference type="ChEBI" id="CHEBI:15377"/>
        <dbReference type="ChEBI" id="CHEBI:28938"/>
        <dbReference type="ChEBI" id="CHEBI:57634"/>
        <dbReference type="ChEBI" id="CHEBI:75989"/>
        <dbReference type="EC" id="3.5.99.6"/>
    </reaction>
</comment>
<comment type="pathway">
    <text evidence="3">Nucleotide-sugar biosynthesis; UDP-N-acetyl-alpha-D-glucosamine biosynthesis; alpha-D-glucosamine 6-phosphate from D-fructose 6-phosphate: step 1/1.</text>
</comment>
<comment type="subunit">
    <text evidence="3">Homohexamer.</text>
</comment>
<comment type="subcellular location">
    <subcellularLocation>
        <location evidence="2">Cytoplasm</location>
    </subcellularLocation>
</comment>
<comment type="similarity">
    <text evidence="4">Belongs to the glucosamine/galactosamine-6-phosphate isomerase family.</text>
</comment>
<dbReference type="EC" id="3.5.99.6" evidence="3"/>
<dbReference type="EMBL" id="AAAB01008984">
    <property type="protein sequence ID" value="EAL39095.3"/>
    <property type="molecule type" value="Genomic_DNA"/>
</dbReference>
<dbReference type="SMR" id="Q5TNH5"/>
<dbReference type="FunCoup" id="Q5TNH5">
    <property type="interactions" value="810"/>
</dbReference>
<dbReference type="STRING" id="7165.Q5TNH5"/>
<dbReference type="PaxDb" id="7165-AGAP009305-PB"/>
<dbReference type="EnsemblMetazoa" id="AGAP009305-RA">
    <property type="protein sequence ID" value="AGAP009305-PA"/>
    <property type="gene ID" value="AGAP009305"/>
</dbReference>
<dbReference type="GeneID" id="1280268"/>
<dbReference type="KEGG" id="aga:1280268"/>
<dbReference type="CTD" id="33783"/>
<dbReference type="VEuPathDB" id="VectorBase:AGAMI1_011414"/>
<dbReference type="VEuPathDB" id="VectorBase:AGAP009305"/>
<dbReference type="eggNOG" id="KOG3148">
    <property type="taxonomic scope" value="Eukaryota"/>
</dbReference>
<dbReference type="InParanoid" id="Q5TNH5"/>
<dbReference type="PhylomeDB" id="Q5TNH5"/>
<dbReference type="UniPathway" id="UPA00113">
    <property type="reaction ID" value="UER00528"/>
</dbReference>
<dbReference type="Proteomes" id="UP000007062">
    <property type="component" value="Chromosome 3R"/>
</dbReference>
<dbReference type="GO" id="GO:0005737">
    <property type="term" value="C:cytoplasm"/>
    <property type="evidence" value="ECO:0000250"/>
    <property type="project" value="UniProtKB"/>
</dbReference>
<dbReference type="GO" id="GO:0004342">
    <property type="term" value="F:glucosamine-6-phosphate deaminase activity"/>
    <property type="evidence" value="ECO:0000250"/>
    <property type="project" value="UniProtKB"/>
</dbReference>
<dbReference type="GO" id="GO:0042802">
    <property type="term" value="F:identical protein binding"/>
    <property type="evidence" value="ECO:0000318"/>
    <property type="project" value="GO_Central"/>
</dbReference>
<dbReference type="GO" id="GO:0005975">
    <property type="term" value="P:carbohydrate metabolic process"/>
    <property type="evidence" value="ECO:0007669"/>
    <property type="project" value="InterPro"/>
</dbReference>
<dbReference type="GO" id="GO:0006091">
    <property type="term" value="P:generation of precursor metabolites and energy"/>
    <property type="evidence" value="ECO:0000250"/>
    <property type="project" value="UniProtKB"/>
</dbReference>
<dbReference type="GO" id="GO:0006043">
    <property type="term" value="P:glucosamine catabolic process"/>
    <property type="evidence" value="ECO:0000250"/>
    <property type="project" value="UniProtKB"/>
</dbReference>
<dbReference type="GO" id="GO:0006046">
    <property type="term" value="P:N-acetylglucosamine catabolic process"/>
    <property type="evidence" value="ECO:0000318"/>
    <property type="project" value="GO_Central"/>
</dbReference>
<dbReference type="GO" id="GO:0019262">
    <property type="term" value="P:N-acetylneuraminate catabolic process"/>
    <property type="evidence" value="ECO:0000318"/>
    <property type="project" value="GO_Central"/>
</dbReference>
<dbReference type="CDD" id="cd01399">
    <property type="entry name" value="GlcN6P_deaminase"/>
    <property type="match status" value="1"/>
</dbReference>
<dbReference type="FunFam" id="3.40.50.1360:FF:000004">
    <property type="entry name" value="Glucosamine-6-phosphate isomerase"/>
    <property type="match status" value="1"/>
</dbReference>
<dbReference type="Gene3D" id="3.40.50.1360">
    <property type="match status" value="1"/>
</dbReference>
<dbReference type="HAMAP" id="MF_01241">
    <property type="entry name" value="GlcN6P_deamin"/>
    <property type="match status" value="1"/>
</dbReference>
<dbReference type="InterPro" id="IPR006148">
    <property type="entry name" value="Glc/Gal-6P_isomerase"/>
</dbReference>
<dbReference type="InterPro" id="IPR004547">
    <property type="entry name" value="Glucosamine6P_isomerase"/>
</dbReference>
<dbReference type="InterPro" id="IPR018321">
    <property type="entry name" value="Glucosamine6P_isomerase_CS"/>
</dbReference>
<dbReference type="InterPro" id="IPR037171">
    <property type="entry name" value="NagB/RpiA_transferase-like"/>
</dbReference>
<dbReference type="NCBIfam" id="TIGR00502">
    <property type="entry name" value="nagB"/>
    <property type="match status" value="1"/>
</dbReference>
<dbReference type="PANTHER" id="PTHR11280">
    <property type="entry name" value="GLUCOSAMINE-6-PHOSPHATE ISOMERASE"/>
    <property type="match status" value="1"/>
</dbReference>
<dbReference type="PANTHER" id="PTHR11280:SF5">
    <property type="entry name" value="GLUCOSAMINE-6-PHOSPHATE ISOMERASE"/>
    <property type="match status" value="1"/>
</dbReference>
<dbReference type="Pfam" id="PF01182">
    <property type="entry name" value="Glucosamine_iso"/>
    <property type="match status" value="1"/>
</dbReference>
<dbReference type="SUPFAM" id="SSF100950">
    <property type="entry name" value="NagB/RpiA/CoA transferase-like"/>
    <property type="match status" value="1"/>
</dbReference>
<dbReference type="PROSITE" id="PS01161">
    <property type="entry name" value="GLC_GALNAC_ISOMERASE"/>
    <property type="match status" value="1"/>
</dbReference>
<accession>Q5TNH5</accession>
<protein>
    <recommendedName>
        <fullName evidence="4">Glucosamine-6-phosphate deaminase</fullName>
        <shortName>GNPDA</shortName>
        <shortName>GlcN6P deaminase</shortName>
        <ecNumber evidence="3">3.5.99.6</ecNumber>
    </recommendedName>
    <alternativeName>
        <fullName evidence="4">Glucosamine-6-phosphate isomerase</fullName>
        <shortName evidence="4">GNPI</shortName>
    </alternativeName>
</protein>
<keyword id="KW-0119">Carbohydrate metabolism</keyword>
<keyword id="KW-0963">Cytoplasm</keyword>
<keyword id="KW-0378">Hydrolase</keyword>
<keyword id="KW-1185">Reference proteome</keyword>
<gene>
    <name type="primary">Gnpda1</name>
    <name type="ORF">AGAP009305</name>
</gene>
<feature type="chain" id="PRO_0000328090" description="Glucosamine-6-phosphate deaminase">
    <location>
        <begin position="1"/>
        <end position="273"/>
    </location>
</feature>
<feature type="active site" description="Proton acceptor; for enolization step" evidence="1">
    <location>
        <position position="72"/>
    </location>
</feature>
<feature type="active site" description="For ring-opening step" evidence="1">
    <location>
        <position position="141"/>
    </location>
</feature>
<feature type="active site" description="Proton acceptor; for ring-opening step" evidence="1">
    <location>
        <position position="143"/>
    </location>
</feature>
<feature type="active site" description="For ring-opening step" evidence="1">
    <location>
        <position position="148"/>
    </location>
</feature>